<dbReference type="PIR" id="JH0701">
    <property type="entry name" value="JH0701"/>
</dbReference>
<dbReference type="SMR" id="P05485"/>
<dbReference type="ConoServer" id="1638">
    <property type="toxin name" value="MVIIB"/>
</dbReference>
<dbReference type="GO" id="GO:0005576">
    <property type="term" value="C:extracellular region"/>
    <property type="evidence" value="ECO:0007669"/>
    <property type="project" value="UniProtKB-SubCell"/>
</dbReference>
<dbReference type="GO" id="GO:0044231">
    <property type="term" value="C:host cell presynaptic membrane"/>
    <property type="evidence" value="ECO:0007669"/>
    <property type="project" value="UniProtKB-KW"/>
</dbReference>
<dbReference type="GO" id="GO:0005246">
    <property type="term" value="F:calcium channel regulator activity"/>
    <property type="evidence" value="ECO:0007669"/>
    <property type="project" value="UniProtKB-KW"/>
</dbReference>
<dbReference type="GO" id="GO:0008200">
    <property type="term" value="F:ion channel inhibitor activity"/>
    <property type="evidence" value="ECO:0007669"/>
    <property type="project" value="InterPro"/>
</dbReference>
<dbReference type="GO" id="GO:0090729">
    <property type="term" value="F:toxin activity"/>
    <property type="evidence" value="ECO:0007669"/>
    <property type="project" value="UniProtKB-KW"/>
</dbReference>
<dbReference type="InterPro" id="IPR012321">
    <property type="entry name" value="Conotoxin_omega-typ_CS"/>
</dbReference>
<dbReference type="SUPFAM" id="SSF57059">
    <property type="entry name" value="omega toxin-like"/>
    <property type="match status" value="1"/>
</dbReference>
<dbReference type="PROSITE" id="PS60004">
    <property type="entry name" value="OMEGA_CONOTOXIN"/>
    <property type="match status" value="1"/>
</dbReference>
<organism>
    <name type="scientific">Conus magus</name>
    <name type="common">Magical cone</name>
    <dbReference type="NCBI Taxonomy" id="6492"/>
    <lineage>
        <taxon>Eukaryota</taxon>
        <taxon>Metazoa</taxon>
        <taxon>Spiralia</taxon>
        <taxon>Lophotrochozoa</taxon>
        <taxon>Mollusca</taxon>
        <taxon>Gastropoda</taxon>
        <taxon>Caenogastropoda</taxon>
        <taxon>Neogastropoda</taxon>
        <taxon>Conoidea</taxon>
        <taxon>Conidae</taxon>
        <taxon>Conus</taxon>
        <taxon>Pionoconus</taxon>
    </lineage>
</organism>
<sequence>CKGKGASCHRTSYDCCTGSCNRGKC</sequence>
<keyword id="KW-0027">Amidation</keyword>
<keyword id="KW-0108">Calcium channel impairing toxin</keyword>
<keyword id="KW-0903">Direct protein sequencing</keyword>
<keyword id="KW-1015">Disulfide bond</keyword>
<keyword id="KW-0872">Ion channel impairing toxin</keyword>
<keyword id="KW-0960">Knottin</keyword>
<keyword id="KW-0528">Neurotoxin</keyword>
<keyword id="KW-0638">Presynaptic neurotoxin</keyword>
<keyword id="KW-0964">Secreted</keyword>
<keyword id="KW-0800">Toxin</keyword>
<keyword id="KW-1218">Voltage-gated calcium channel impairing toxin</keyword>
<protein>
    <recommendedName>
        <fullName>Omega-conotoxin MVIIB</fullName>
    </recommendedName>
    <alternativeName>
        <fullName>SNX-159</fullName>
    </alternativeName>
</protein>
<proteinExistence type="evidence at protein level"/>
<evidence type="ECO:0000250" key="1">
    <source>
        <dbReference type="UniProtKB" id="P05484"/>
    </source>
</evidence>
<evidence type="ECO:0000269" key="2">
    <source>
    </source>
</evidence>
<evidence type="ECO:0000305" key="3"/>
<evidence type="ECO:0000305" key="4">
    <source>
    </source>
</evidence>
<feature type="peptide" id="PRO_0000044476" description="Omega-conotoxin MVIIB" evidence="2">
    <location>
        <begin position="1"/>
        <end position="25"/>
    </location>
</feature>
<feature type="modified residue" description="Cysteine amide" evidence="2">
    <location>
        <position position="25"/>
    </location>
</feature>
<feature type="disulfide bond" evidence="1">
    <location>
        <begin position="1"/>
        <end position="16"/>
    </location>
</feature>
<feature type="disulfide bond" evidence="1">
    <location>
        <begin position="8"/>
        <end position="20"/>
    </location>
</feature>
<feature type="disulfide bond" evidence="1">
    <location>
        <begin position="15"/>
        <end position="25"/>
    </location>
</feature>
<reference key="1">
    <citation type="journal article" date="1987" name="Biochemistry">
        <title>Neuronal calcium channel antagonists. Discrimination between calcium channel subtypes using omega-conotoxin from Conus magus venom.</title>
        <authorList>
            <person name="Olivera B.M."/>
            <person name="Cruz L.J."/>
            <person name="de Santos V."/>
            <person name="Lecheminant G.W."/>
            <person name="Griffin D."/>
            <person name="Zeikus R.D."/>
            <person name="McIntosh J.M."/>
            <person name="Galyean R."/>
            <person name="Varga J."/>
            <person name="Gray W.R."/>
            <person name="Rivier J.E."/>
        </authorList>
    </citation>
    <scope>PROTEIN SEQUENCE</scope>
    <scope>AMIDATION AT CYS-25</scope>
    <scope>FUNCTION</scope>
    <scope>SUBCELLULAR LOCATION</scope>
</reference>
<comment type="function">
    <text evidence="2">Omega-conotoxins act at presynaptic membranes, they bind and block voltage-gated calcium channels (Cav).</text>
</comment>
<comment type="subcellular location">
    <subcellularLocation>
        <location evidence="2">Secreted</location>
    </subcellularLocation>
</comment>
<comment type="tissue specificity">
    <text evidence="4">Expressed by the venom duct.</text>
</comment>
<comment type="domain">
    <text>The presence of a 'disulfide through disulfide knot' structurally defines this protein as a knottin.</text>
</comment>
<comment type="domain">
    <text evidence="3">The cysteine framework is VI/VII (C-C-CC-C-C).</text>
</comment>
<comment type="similarity">
    <text evidence="3">Belongs to the conotoxin O1 superfamily.</text>
</comment>
<accession>P05485</accession>
<name>O17B_CONMA</name>